<feature type="chain" id="PRO_0000425710" description="Ca(2+)/H(+) antiporter">
    <location>
        <begin position="1"/>
        <end position="373"/>
    </location>
</feature>
<feature type="transmembrane region" description="Helical" evidence="1">
    <location>
        <begin position="6"/>
        <end position="26"/>
    </location>
</feature>
<feature type="transmembrane region" description="Helical" evidence="1">
    <location>
        <begin position="29"/>
        <end position="49"/>
    </location>
</feature>
<feature type="transmembrane region" description="Helical" evidence="1">
    <location>
        <begin position="61"/>
        <end position="81"/>
    </location>
</feature>
<feature type="transmembrane region" description="Helical" evidence="1">
    <location>
        <begin position="94"/>
        <end position="114"/>
    </location>
</feature>
<feature type="transmembrane region" description="Helical" evidence="1">
    <location>
        <begin position="134"/>
        <end position="154"/>
    </location>
</feature>
<feature type="transmembrane region" description="Helical" evidence="1">
    <location>
        <begin position="162"/>
        <end position="182"/>
    </location>
</feature>
<feature type="transmembrane region" description="Helical" evidence="1">
    <location>
        <begin position="220"/>
        <end position="240"/>
    </location>
</feature>
<feature type="transmembrane region" description="Helical" evidence="1">
    <location>
        <begin position="249"/>
        <end position="269"/>
    </location>
</feature>
<feature type="transmembrane region" description="Helical" evidence="1">
    <location>
        <begin position="291"/>
        <end position="311"/>
    </location>
</feature>
<feature type="transmembrane region" description="Helical" evidence="1">
    <location>
        <begin position="318"/>
        <end position="338"/>
    </location>
</feature>
<feature type="transmembrane region" description="Helical" evidence="1">
    <location>
        <begin position="349"/>
        <end position="369"/>
    </location>
</feature>
<feature type="mutagenesis site" description="Lack of activity." evidence="2">
    <original>E</original>
    <variation>D</variation>
    <variation>H</variation>
    <location>
        <position position="74"/>
    </location>
</feature>
<feature type="mutagenesis site" description="2-fold decrease in activity." evidence="2">
    <original>E</original>
    <variation>Q</variation>
    <location>
        <position position="74"/>
    </location>
</feature>
<feature type="mutagenesis site" description="Lack of activity." evidence="2">
    <original>E</original>
    <variation>D</variation>
    <variation>H</variation>
    <variation>Q</variation>
    <location>
        <position position="324"/>
    </location>
</feature>
<evidence type="ECO:0000255" key="1"/>
<evidence type="ECO:0000269" key="2">
    <source>
    </source>
</evidence>
<evidence type="ECO:0000305" key="3"/>
<accession>Q75XW3</accession>
<proteinExistence type="evidence at protein level"/>
<protein>
    <recommendedName>
        <fullName>Ca(2+)/H(+) antiporter</fullName>
    </recommendedName>
    <alternativeName>
        <fullName>ApCAX</fullName>
    </alternativeName>
</protein>
<sequence>MLNKNTIFFGLLLFIPISLLGHWLHWDEVSIFLTASLAIIPLAAFMGEATEEIAIVVGPTLGGLLNATFGNATELILAFIALKSGLISVVKATITGSIISNLLLVMGFAMLLGGLRYKEQVFQSEVARVNASSMNLAVIAILLPTAVEHTSNGIGEETLQTLSVAVAIVLIIVYGLTLLFSMKTHSYLCEVGEIDQQSSSAMESGDKIPEKKPEDVNLWFWLGILLVVTITVAIESELLVNSLESATESLGLTALFTGVILLPVIGNAAEHFTAVTVAMKNKMDLSLSVAVGSTLQIALFVAPVLVIAGWIMGQPMDLDFNPFELVAVAVSVLIANSISSDGKSNWLEGSLLLATYIVIGLAFFFHPVVPEIG</sequence>
<dbReference type="EMBL" id="AB120300">
    <property type="protein sequence ID" value="BAD08687.1"/>
    <property type="molecule type" value="Genomic_DNA"/>
</dbReference>
<dbReference type="SMR" id="Q75XW3"/>
<dbReference type="GO" id="GO:0005886">
    <property type="term" value="C:plasma membrane"/>
    <property type="evidence" value="ECO:0000314"/>
    <property type="project" value="UniProtKB"/>
</dbReference>
<dbReference type="GO" id="GO:0015369">
    <property type="term" value="F:calcium:proton antiporter activity"/>
    <property type="evidence" value="ECO:0000314"/>
    <property type="project" value="UniProtKB"/>
</dbReference>
<dbReference type="GO" id="GO:0070588">
    <property type="term" value="P:calcium ion transmembrane transport"/>
    <property type="evidence" value="ECO:0000314"/>
    <property type="project" value="UniProtKB"/>
</dbReference>
<dbReference type="GO" id="GO:0006874">
    <property type="term" value="P:intracellular calcium ion homeostasis"/>
    <property type="evidence" value="ECO:0007669"/>
    <property type="project" value="TreeGrafter"/>
</dbReference>
<dbReference type="Gene3D" id="1.20.1420.30">
    <property type="entry name" value="NCX, central ion-binding region"/>
    <property type="match status" value="1"/>
</dbReference>
<dbReference type="InterPro" id="IPR004713">
    <property type="entry name" value="CaH_exchang"/>
</dbReference>
<dbReference type="InterPro" id="IPR004798">
    <property type="entry name" value="CAX-like"/>
</dbReference>
<dbReference type="InterPro" id="IPR004837">
    <property type="entry name" value="NaCa_Exmemb"/>
</dbReference>
<dbReference type="InterPro" id="IPR044880">
    <property type="entry name" value="NCX_ion-bd_dom_sf"/>
</dbReference>
<dbReference type="NCBIfam" id="TIGR00846">
    <property type="entry name" value="caca2"/>
    <property type="match status" value="1"/>
</dbReference>
<dbReference type="NCBIfam" id="TIGR00378">
    <property type="entry name" value="cax"/>
    <property type="match status" value="1"/>
</dbReference>
<dbReference type="PANTHER" id="PTHR31503">
    <property type="entry name" value="VACUOLAR CALCIUM ION TRANSPORTER"/>
    <property type="match status" value="1"/>
</dbReference>
<dbReference type="PANTHER" id="PTHR31503:SF22">
    <property type="entry name" value="VACUOLAR CALCIUM ION TRANSPORTER"/>
    <property type="match status" value="1"/>
</dbReference>
<dbReference type="Pfam" id="PF01699">
    <property type="entry name" value="Na_Ca_ex"/>
    <property type="match status" value="2"/>
</dbReference>
<name>CAX_APHHA</name>
<reference key="1">
    <citation type="journal article" date="2004" name="J. Biol. Chem.">
        <title>Isolation and functional characterization of Ca2+/H+ antiporters from cyanobacteria.</title>
        <authorList>
            <person name="Waditee R."/>
            <person name="Hossain G.S."/>
            <person name="Tanaka Y."/>
            <person name="Nakamura T."/>
            <person name="Shikata M."/>
            <person name="Takano J."/>
            <person name="Takabe T."/>
            <person name="Takabe T."/>
        </authorList>
    </citation>
    <scope>NUCLEOTIDE SEQUENCE [GENOMIC DNA]</scope>
    <scope>FUNCTION</scope>
    <scope>BIOPHYSICOCHEMICAL PROPERTIES</scope>
    <scope>SUBCELLULAR LOCATION</scope>
    <scope>MUTAGENESIS OF GLU-74 AND GLU-324</scope>
</reference>
<keyword id="KW-0050">Antiport</keyword>
<keyword id="KW-0106">Calcium</keyword>
<keyword id="KW-0109">Calcium transport</keyword>
<keyword id="KW-0997">Cell inner membrane</keyword>
<keyword id="KW-1003">Cell membrane</keyword>
<keyword id="KW-0406">Ion transport</keyword>
<keyword id="KW-0472">Membrane</keyword>
<keyword id="KW-0812">Transmembrane</keyword>
<keyword id="KW-1133">Transmembrane helix</keyword>
<keyword id="KW-0813">Transport</keyword>
<organism>
    <name type="scientific">Aphanothece halophytica</name>
    <dbReference type="NCBI Taxonomy" id="72020"/>
    <lineage>
        <taxon>Bacteria</taxon>
        <taxon>Bacillati</taxon>
        <taxon>Cyanobacteriota</taxon>
        <taxon>Cyanophyceae</taxon>
        <taxon>Oscillatoriophycideae</taxon>
        <taxon>Chroococcales</taxon>
        <taxon>Aphanothecaceae</taxon>
        <taxon>Aphanothece</taxon>
    </lineage>
</organism>
<comment type="function">
    <text evidence="2">Ca(+)/H(+) antiporter that extrudes calcium in exchange for external protons. Plays an important role in salt tolerance. Does not transport sodium or lithium.</text>
</comment>
<comment type="biophysicochemical properties">
    <phDependence>
        <text evidence="2">Optimum pH is 8.8.</text>
    </phDependence>
</comment>
<comment type="subcellular location">
    <subcellularLocation>
        <location evidence="2">Cell inner membrane</location>
        <topology evidence="2">Multi-pass membrane protein</topology>
    </subcellularLocation>
</comment>
<comment type="similarity">
    <text evidence="3">Belongs to the Ca(2+):cation antiporter (CaCA) (TC 2.A.19) family. Cation/proton exchanger (CAX) subfamily.</text>
</comment>